<name>Y1449_METPP</name>
<keyword id="KW-1185">Reference proteome</keyword>
<reference key="1">
    <citation type="journal article" date="2007" name="J. Bacteriol.">
        <title>Whole-genome analysis of the methyl tert-butyl ether-degrading beta-proteobacterium Methylibium petroleiphilum PM1.</title>
        <authorList>
            <person name="Kane S.R."/>
            <person name="Chakicherla A.Y."/>
            <person name="Chain P.S.G."/>
            <person name="Schmidt R."/>
            <person name="Shin M.W."/>
            <person name="Legler T.C."/>
            <person name="Scow K.M."/>
            <person name="Larimer F.W."/>
            <person name="Lucas S.M."/>
            <person name="Richardson P.M."/>
            <person name="Hristova K.R."/>
        </authorList>
    </citation>
    <scope>NUCLEOTIDE SEQUENCE [LARGE SCALE GENOMIC DNA]</scope>
    <source>
        <strain>ATCC BAA-1232 / LMG 22953 / PM1</strain>
    </source>
</reference>
<organism>
    <name type="scientific">Methylibium petroleiphilum (strain ATCC BAA-1232 / LMG 22953 / PM1)</name>
    <dbReference type="NCBI Taxonomy" id="420662"/>
    <lineage>
        <taxon>Bacteria</taxon>
        <taxon>Pseudomonadati</taxon>
        <taxon>Pseudomonadota</taxon>
        <taxon>Betaproteobacteria</taxon>
        <taxon>Burkholderiales</taxon>
        <taxon>Sphaerotilaceae</taxon>
        <taxon>Methylibium</taxon>
    </lineage>
</organism>
<dbReference type="EMBL" id="CP000555">
    <property type="protein sequence ID" value="ABM94411.1"/>
    <property type="molecule type" value="Genomic_DNA"/>
</dbReference>
<dbReference type="RefSeq" id="WP_011829048.1">
    <property type="nucleotide sequence ID" value="NC_008825.1"/>
</dbReference>
<dbReference type="SMR" id="A2SFS2"/>
<dbReference type="STRING" id="420662.Mpe_A1449"/>
<dbReference type="KEGG" id="mpt:Mpe_A1449"/>
<dbReference type="eggNOG" id="COG3132">
    <property type="taxonomic scope" value="Bacteria"/>
</dbReference>
<dbReference type="HOGENOM" id="CLU_057831_0_0_4"/>
<dbReference type="Proteomes" id="UP000000366">
    <property type="component" value="Chromosome"/>
</dbReference>
<dbReference type="Gene3D" id="1.10.10.10">
    <property type="entry name" value="Winged helix-like DNA-binding domain superfamily/Winged helix DNA-binding domain"/>
    <property type="match status" value="2"/>
</dbReference>
<dbReference type="HAMAP" id="MF_01584">
    <property type="entry name" value="UPF0502"/>
    <property type="match status" value="1"/>
</dbReference>
<dbReference type="InterPro" id="IPR007432">
    <property type="entry name" value="DUF480"/>
</dbReference>
<dbReference type="InterPro" id="IPR036388">
    <property type="entry name" value="WH-like_DNA-bd_sf"/>
</dbReference>
<dbReference type="InterPro" id="IPR036390">
    <property type="entry name" value="WH_DNA-bd_sf"/>
</dbReference>
<dbReference type="PANTHER" id="PTHR38768">
    <property type="entry name" value="UPF0502 PROTEIN YCEH"/>
    <property type="match status" value="1"/>
</dbReference>
<dbReference type="PANTHER" id="PTHR38768:SF1">
    <property type="entry name" value="UPF0502 PROTEIN YCEH"/>
    <property type="match status" value="1"/>
</dbReference>
<dbReference type="Pfam" id="PF04337">
    <property type="entry name" value="DUF480"/>
    <property type="match status" value="1"/>
</dbReference>
<dbReference type="SUPFAM" id="SSF46785">
    <property type="entry name" value="Winged helix' DNA-binding domain"/>
    <property type="match status" value="2"/>
</dbReference>
<proteinExistence type="inferred from homology"/>
<protein>
    <recommendedName>
        <fullName evidence="1">UPF0502 protein Mpe_A1449</fullName>
    </recommendedName>
</protein>
<gene>
    <name type="ordered locus">Mpe_A1449</name>
</gene>
<sequence>MDSASDAGERRPARAALRVLSLIEQRVVAVLVEKQHTVSDSYPLSLNTLLLGCNQKTAREPVINATESEVLAAVDELKRLSLVIEVSGSRVARYEHNLQRVLGVPSQAAAILTLLMLRGPQTAAELRANTERLHRFADISSVEGFLDELALREPPLVVKLPRAPGSREARWAQLLGGPPEVSVAAPAGAAPEDLVTAGEIQALRANQHRLQAEVVMLRAQLHRLAAELGVDLS</sequence>
<accession>A2SFS2</accession>
<evidence type="ECO:0000255" key="1">
    <source>
        <dbReference type="HAMAP-Rule" id="MF_01584"/>
    </source>
</evidence>
<comment type="similarity">
    <text evidence="1">Belongs to the UPF0502 family.</text>
</comment>
<feature type="chain" id="PRO_0000309395" description="UPF0502 protein Mpe_A1449">
    <location>
        <begin position="1"/>
        <end position="233"/>
    </location>
</feature>